<organism>
    <name type="scientific">Wolbachia pipientis subsp. Culex pipiens (strain wPip)</name>
    <dbReference type="NCBI Taxonomy" id="570417"/>
    <lineage>
        <taxon>Bacteria</taxon>
        <taxon>Pseudomonadati</taxon>
        <taxon>Pseudomonadota</taxon>
        <taxon>Alphaproteobacteria</taxon>
        <taxon>Rickettsiales</taxon>
        <taxon>Anaplasmataceae</taxon>
        <taxon>Wolbachieae</taxon>
        <taxon>Wolbachia</taxon>
    </lineage>
</organism>
<sequence>MDIENNLQDLKKKFSDVERNLENPTNLSQKEFVSFSKEYSELRPIIEIIDEYNILKEEISDLEEIMKDENSDGDIKELAKEELLEKQKIVLPKVKAKLKLALLPKDEDDSRNAILEIRAGTGGEEAALFAAMLFRMYQKYAERRNWKFEPISISNTGIGGYKEASALINGTEVFARLKFESGVHRVQRVPETESSGRLHTSAATVAILPEVEEVDFEIEEKDLRIDVYRSSGPGGQSVNTTDSAVRVTHLPTGIVVIQQDEKSQHKNKAKALKVLRARLYEIERQKKEMERSTMRKSQIGSGDRSERIRTYNFPQSRITDHRINLTSHRLEQIIKEGELDEFIEALISRNEAERLTGGGNVTF</sequence>
<dbReference type="EMBL" id="AM999887">
    <property type="protein sequence ID" value="CAQ54152.1"/>
    <property type="molecule type" value="Genomic_DNA"/>
</dbReference>
<dbReference type="RefSeq" id="WP_007302826.1">
    <property type="nucleotide sequence ID" value="NC_010981.1"/>
</dbReference>
<dbReference type="SMR" id="B3CL87"/>
<dbReference type="KEGG" id="wpi:WP0043"/>
<dbReference type="eggNOG" id="COG0216">
    <property type="taxonomic scope" value="Bacteria"/>
</dbReference>
<dbReference type="HOGENOM" id="CLU_036856_0_1_5"/>
<dbReference type="Proteomes" id="UP000008814">
    <property type="component" value="Chromosome"/>
</dbReference>
<dbReference type="GO" id="GO:0005737">
    <property type="term" value="C:cytoplasm"/>
    <property type="evidence" value="ECO:0007669"/>
    <property type="project" value="UniProtKB-SubCell"/>
</dbReference>
<dbReference type="GO" id="GO:0016149">
    <property type="term" value="F:translation release factor activity, codon specific"/>
    <property type="evidence" value="ECO:0007669"/>
    <property type="project" value="UniProtKB-UniRule"/>
</dbReference>
<dbReference type="FunFam" id="3.30.160.20:FF:000004">
    <property type="entry name" value="Peptide chain release factor 1"/>
    <property type="match status" value="1"/>
</dbReference>
<dbReference type="FunFam" id="3.30.70.1660:FF:000002">
    <property type="entry name" value="Peptide chain release factor 1"/>
    <property type="match status" value="1"/>
</dbReference>
<dbReference type="FunFam" id="3.30.70.1660:FF:000004">
    <property type="entry name" value="Peptide chain release factor 1"/>
    <property type="match status" value="1"/>
</dbReference>
<dbReference type="Gene3D" id="3.30.160.20">
    <property type="match status" value="1"/>
</dbReference>
<dbReference type="Gene3D" id="3.30.70.1660">
    <property type="match status" value="1"/>
</dbReference>
<dbReference type="Gene3D" id="6.10.140.1950">
    <property type="match status" value="1"/>
</dbReference>
<dbReference type="HAMAP" id="MF_00093">
    <property type="entry name" value="Rel_fac_1"/>
    <property type="match status" value="1"/>
</dbReference>
<dbReference type="InterPro" id="IPR005139">
    <property type="entry name" value="PCRF"/>
</dbReference>
<dbReference type="InterPro" id="IPR000352">
    <property type="entry name" value="Pep_chain_release_fac_I"/>
</dbReference>
<dbReference type="InterPro" id="IPR045853">
    <property type="entry name" value="Pep_chain_release_fac_I_sf"/>
</dbReference>
<dbReference type="InterPro" id="IPR050057">
    <property type="entry name" value="Prokaryotic/Mito_RF"/>
</dbReference>
<dbReference type="InterPro" id="IPR004373">
    <property type="entry name" value="RF-1"/>
</dbReference>
<dbReference type="NCBIfam" id="TIGR00019">
    <property type="entry name" value="prfA"/>
    <property type="match status" value="1"/>
</dbReference>
<dbReference type="NCBIfam" id="NF001859">
    <property type="entry name" value="PRK00591.1"/>
    <property type="match status" value="1"/>
</dbReference>
<dbReference type="PANTHER" id="PTHR43804">
    <property type="entry name" value="LD18447P"/>
    <property type="match status" value="1"/>
</dbReference>
<dbReference type="PANTHER" id="PTHR43804:SF7">
    <property type="entry name" value="LD18447P"/>
    <property type="match status" value="1"/>
</dbReference>
<dbReference type="Pfam" id="PF03462">
    <property type="entry name" value="PCRF"/>
    <property type="match status" value="1"/>
</dbReference>
<dbReference type="Pfam" id="PF00472">
    <property type="entry name" value="RF-1"/>
    <property type="match status" value="1"/>
</dbReference>
<dbReference type="SMART" id="SM00937">
    <property type="entry name" value="PCRF"/>
    <property type="match status" value="1"/>
</dbReference>
<dbReference type="SUPFAM" id="SSF75620">
    <property type="entry name" value="Release factor"/>
    <property type="match status" value="1"/>
</dbReference>
<dbReference type="PROSITE" id="PS00745">
    <property type="entry name" value="RF_PROK_I"/>
    <property type="match status" value="1"/>
</dbReference>
<feature type="chain" id="PRO_1000093523" description="Peptide chain release factor 1">
    <location>
        <begin position="1"/>
        <end position="363"/>
    </location>
</feature>
<feature type="region of interest" description="Disordered" evidence="2">
    <location>
        <begin position="286"/>
        <end position="305"/>
    </location>
</feature>
<feature type="modified residue" description="N5-methylglutamine" evidence="1">
    <location>
        <position position="236"/>
    </location>
</feature>
<name>RF1_WOLPP</name>
<accession>B3CL87</accession>
<keyword id="KW-0963">Cytoplasm</keyword>
<keyword id="KW-0488">Methylation</keyword>
<keyword id="KW-0648">Protein biosynthesis</keyword>
<comment type="function">
    <text evidence="1">Peptide chain release factor 1 directs the termination of translation in response to the peptide chain termination codons UAG and UAA.</text>
</comment>
<comment type="subcellular location">
    <subcellularLocation>
        <location evidence="1">Cytoplasm</location>
    </subcellularLocation>
</comment>
<comment type="PTM">
    <text evidence="1">Methylated by PrmC. Methylation increases the termination efficiency of RF1.</text>
</comment>
<comment type="similarity">
    <text evidence="1">Belongs to the prokaryotic/mitochondrial release factor family.</text>
</comment>
<protein>
    <recommendedName>
        <fullName evidence="1">Peptide chain release factor 1</fullName>
        <shortName evidence="1">RF-1</shortName>
    </recommendedName>
</protein>
<reference key="1">
    <citation type="journal article" date="2008" name="Mol. Biol. Evol.">
        <title>Genome evolution of Wolbachia strain wPip from the Culex pipiens group.</title>
        <authorList>
            <person name="Klasson L."/>
            <person name="Walker T."/>
            <person name="Sebaihia M."/>
            <person name="Sanders M.J."/>
            <person name="Quail M.A."/>
            <person name="Lord A."/>
            <person name="Sanders S."/>
            <person name="Earl J."/>
            <person name="O'Neill S.L."/>
            <person name="Thomson N."/>
            <person name="Sinkins S.P."/>
            <person name="Parkhill J."/>
        </authorList>
    </citation>
    <scope>NUCLEOTIDE SEQUENCE [LARGE SCALE GENOMIC DNA]</scope>
    <source>
        <strain>wPip</strain>
    </source>
</reference>
<gene>
    <name evidence="1" type="primary">prfA</name>
    <name type="ordered locus">WP0043</name>
</gene>
<proteinExistence type="inferred from homology"/>
<evidence type="ECO:0000255" key="1">
    <source>
        <dbReference type="HAMAP-Rule" id="MF_00093"/>
    </source>
</evidence>
<evidence type="ECO:0000256" key="2">
    <source>
        <dbReference type="SAM" id="MobiDB-lite"/>
    </source>
</evidence>